<comment type="function">
    <text evidence="1">Together with the chaperonin GroEL, plays an essential role in assisting protein folding. The GroEL-GroES system forms a nano-cage that allows encapsulation of the non-native substrate proteins and provides a physical environment optimized to promote and accelerate protein folding. GroES binds to the apical surface of the GroEL ring, thereby capping the opening of the GroEL channel.</text>
</comment>
<comment type="subunit">
    <text evidence="1">Heptamer of 7 subunits arranged in a ring. Interacts with the chaperonin GroEL.</text>
</comment>
<comment type="subcellular location">
    <subcellularLocation>
        <location evidence="1">Cytoplasm</location>
    </subcellularLocation>
</comment>
<comment type="similarity">
    <text evidence="1">Belongs to the GroES chaperonin family.</text>
</comment>
<dbReference type="EMBL" id="AE009949">
    <property type="protein sequence ID" value="AAL98582.1"/>
    <property type="molecule type" value="Genomic_DNA"/>
</dbReference>
<dbReference type="RefSeq" id="WP_002991292.1">
    <property type="nucleotide sequence ID" value="NC_003485.1"/>
</dbReference>
<dbReference type="SMR" id="P63772"/>
<dbReference type="GeneID" id="69901535"/>
<dbReference type="KEGG" id="spm:spyM18_2131"/>
<dbReference type="HOGENOM" id="CLU_132825_1_2_9"/>
<dbReference type="GO" id="GO:0005737">
    <property type="term" value="C:cytoplasm"/>
    <property type="evidence" value="ECO:0007669"/>
    <property type="project" value="UniProtKB-SubCell"/>
</dbReference>
<dbReference type="GO" id="GO:0005524">
    <property type="term" value="F:ATP binding"/>
    <property type="evidence" value="ECO:0007669"/>
    <property type="project" value="InterPro"/>
</dbReference>
<dbReference type="GO" id="GO:0046872">
    <property type="term" value="F:metal ion binding"/>
    <property type="evidence" value="ECO:0007669"/>
    <property type="project" value="TreeGrafter"/>
</dbReference>
<dbReference type="GO" id="GO:0044183">
    <property type="term" value="F:protein folding chaperone"/>
    <property type="evidence" value="ECO:0007669"/>
    <property type="project" value="InterPro"/>
</dbReference>
<dbReference type="GO" id="GO:0051087">
    <property type="term" value="F:protein-folding chaperone binding"/>
    <property type="evidence" value="ECO:0007669"/>
    <property type="project" value="TreeGrafter"/>
</dbReference>
<dbReference type="GO" id="GO:0051082">
    <property type="term" value="F:unfolded protein binding"/>
    <property type="evidence" value="ECO:0007669"/>
    <property type="project" value="TreeGrafter"/>
</dbReference>
<dbReference type="GO" id="GO:0051085">
    <property type="term" value="P:chaperone cofactor-dependent protein refolding"/>
    <property type="evidence" value="ECO:0007669"/>
    <property type="project" value="TreeGrafter"/>
</dbReference>
<dbReference type="CDD" id="cd00320">
    <property type="entry name" value="cpn10"/>
    <property type="match status" value="1"/>
</dbReference>
<dbReference type="FunFam" id="2.30.33.40:FF:000001">
    <property type="entry name" value="10 kDa chaperonin"/>
    <property type="match status" value="1"/>
</dbReference>
<dbReference type="Gene3D" id="2.30.33.40">
    <property type="entry name" value="GroES chaperonin"/>
    <property type="match status" value="1"/>
</dbReference>
<dbReference type="HAMAP" id="MF_00580">
    <property type="entry name" value="CH10"/>
    <property type="match status" value="1"/>
</dbReference>
<dbReference type="InterPro" id="IPR020818">
    <property type="entry name" value="Chaperonin_GroES"/>
</dbReference>
<dbReference type="InterPro" id="IPR037124">
    <property type="entry name" value="Chaperonin_GroES_sf"/>
</dbReference>
<dbReference type="InterPro" id="IPR018369">
    <property type="entry name" value="Chaprnonin_Cpn10_CS"/>
</dbReference>
<dbReference type="InterPro" id="IPR011032">
    <property type="entry name" value="GroES-like_sf"/>
</dbReference>
<dbReference type="NCBIfam" id="NF001528">
    <property type="entry name" value="PRK00364.1-4"/>
    <property type="match status" value="1"/>
</dbReference>
<dbReference type="PANTHER" id="PTHR10772">
    <property type="entry name" value="10 KDA HEAT SHOCK PROTEIN"/>
    <property type="match status" value="1"/>
</dbReference>
<dbReference type="PANTHER" id="PTHR10772:SF58">
    <property type="entry name" value="CO-CHAPERONIN GROES"/>
    <property type="match status" value="1"/>
</dbReference>
<dbReference type="Pfam" id="PF00166">
    <property type="entry name" value="Cpn10"/>
    <property type="match status" value="1"/>
</dbReference>
<dbReference type="PRINTS" id="PR00297">
    <property type="entry name" value="CHAPERONIN10"/>
</dbReference>
<dbReference type="SMART" id="SM00883">
    <property type="entry name" value="Cpn10"/>
    <property type="match status" value="1"/>
</dbReference>
<dbReference type="SUPFAM" id="SSF50129">
    <property type="entry name" value="GroES-like"/>
    <property type="match status" value="1"/>
</dbReference>
<dbReference type="PROSITE" id="PS00681">
    <property type="entry name" value="CHAPERONINS_CPN10"/>
    <property type="match status" value="1"/>
</dbReference>
<proteinExistence type="inferred from homology"/>
<accession>P63772</accession>
<accession>Q99XS0</accession>
<sequence>MLKPLGDRVVVRFDDEKEQTVGGFVLAGTHKESTRKATVLAVSETGVRTITGDSVLPSVSVGQEVLVENGHDLEVTVDDEKVSIIRESDIIAIVTK</sequence>
<gene>
    <name evidence="1" type="primary">groES</name>
    <name evidence="1" type="synonym">groS</name>
    <name type="ordered locus">spyM18_2131</name>
</gene>
<feature type="chain" id="PRO_0000174871" description="Co-chaperonin GroES">
    <location>
        <begin position="1"/>
        <end position="96"/>
    </location>
</feature>
<reference key="1">
    <citation type="journal article" date="2002" name="Proc. Natl. Acad. Sci. U.S.A.">
        <title>Genome sequence and comparative microarray analysis of serotype M18 group A Streptococcus strains associated with acute rheumatic fever outbreaks.</title>
        <authorList>
            <person name="Smoot J.C."/>
            <person name="Barbian K.D."/>
            <person name="Van Gompel J.J."/>
            <person name="Smoot L.M."/>
            <person name="Chaussee M.S."/>
            <person name="Sylva G.L."/>
            <person name="Sturdevant D.E."/>
            <person name="Ricklefs S.M."/>
            <person name="Porcella S.F."/>
            <person name="Parkins L.D."/>
            <person name="Beres S.B."/>
            <person name="Campbell D.S."/>
            <person name="Smith T.M."/>
            <person name="Zhang Q."/>
            <person name="Kapur V."/>
            <person name="Daly J.A."/>
            <person name="Veasy L.G."/>
            <person name="Musser J.M."/>
        </authorList>
    </citation>
    <scope>NUCLEOTIDE SEQUENCE [LARGE SCALE GENOMIC DNA]</scope>
    <source>
        <strain>MGAS8232</strain>
    </source>
</reference>
<organism>
    <name type="scientific">Streptococcus pyogenes serotype M18 (strain MGAS8232)</name>
    <dbReference type="NCBI Taxonomy" id="186103"/>
    <lineage>
        <taxon>Bacteria</taxon>
        <taxon>Bacillati</taxon>
        <taxon>Bacillota</taxon>
        <taxon>Bacilli</taxon>
        <taxon>Lactobacillales</taxon>
        <taxon>Streptococcaceae</taxon>
        <taxon>Streptococcus</taxon>
    </lineage>
</organism>
<name>CH10_STRP8</name>
<keyword id="KW-0143">Chaperone</keyword>
<keyword id="KW-0963">Cytoplasm</keyword>
<evidence type="ECO:0000255" key="1">
    <source>
        <dbReference type="HAMAP-Rule" id="MF_00580"/>
    </source>
</evidence>
<protein>
    <recommendedName>
        <fullName evidence="1">Co-chaperonin GroES</fullName>
    </recommendedName>
    <alternativeName>
        <fullName evidence="1">10 kDa chaperonin</fullName>
    </alternativeName>
    <alternativeName>
        <fullName evidence="1">Chaperonin-10</fullName>
        <shortName evidence="1">Cpn10</shortName>
    </alternativeName>
</protein>